<proteinExistence type="inferred from homology"/>
<keyword id="KW-1185">Reference proteome</keyword>
<accession>Q58310</accession>
<name>Y900_METJA</name>
<evidence type="ECO:0000305" key="1"/>
<sequence length="551" mass="63493">MVIIMSEAELKEAMKRNPHLRRYIENFKRTYMRIPDFMVSLSRELKELKYPNIIYPVGDPIFIHIFGTPETKTKYIVIEPTLETAEEKLKYKMILNKILELAPYEETPKSVEEFEEVLTRLFNACTKVTEAVGEEGFFQRIFRFADNKIKITPEERDKFLYILKRDLIGLGNLEPIGRDPYLEDIHVIGPKNCHVVHKIFGMLPTNITWEDEIELADYLKNLGERMGRPVSDANPIVDGTLPDGSRINIIYSTDVSPKGPSFTIRKFTDVPISVTQLISWGTFSTEVAAYLWLCLEYGMSIFICGETASGKTTTLNAILPFIKPNSKIFSCEDTPEVKPPHPVWQQLVTRERGPEESRVTLFDLLRAALRSRPNYIIVGEIRSVEAAVAFQAMQTGHPVLSTFHAANVRKMIQRLNGDPINVPLTFMDNLNVALFQLAVYQRGKVLRRVVSIEEIEGYYKEVDGVVTRAVFQWEPDKDRHVFTGRNNSYVLEEKIAKAAGYEDPRDIYNELELRARILEEMIAREIFDYYQVRDIIWAFYEKGLEGLPFPI</sequence>
<feature type="chain" id="PRO_0000207310" description="Uncharacterized protein MJ0900">
    <location>
        <begin position="1"/>
        <end position="551"/>
    </location>
</feature>
<protein>
    <recommendedName>
        <fullName>Uncharacterized protein MJ0900</fullName>
    </recommendedName>
</protein>
<gene>
    <name type="ordered locus">MJ0900</name>
</gene>
<organism>
    <name type="scientific">Methanocaldococcus jannaschii (strain ATCC 43067 / DSM 2661 / JAL-1 / JCM 10045 / NBRC 100440)</name>
    <name type="common">Methanococcus jannaschii</name>
    <dbReference type="NCBI Taxonomy" id="243232"/>
    <lineage>
        <taxon>Archaea</taxon>
        <taxon>Methanobacteriati</taxon>
        <taxon>Methanobacteriota</taxon>
        <taxon>Methanomada group</taxon>
        <taxon>Methanococci</taxon>
        <taxon>Methanococcales</taxon>
        <taxon>Methanocaldococcaceae</taxon>
        <taxon>Methanocaldococcus</taxon>
    </lineage>
</organism>
<dbReference type="EMBL" id="L77117">
    <property type="protein sequence ID" value="AAB98903.1"/>
    <property type="molecule type" value="Genomic_DNA"/>
</dbReference>
<dbReference type="PIR" id="D64412">
    <property type="entry name" value="D64412"/>
</dbReference>
<dbReference type="SMR" id="Q58310"/>
<dbReference type="STRING" id="243232.MJ_0900"/>
<dbReference type="PaxDb" id="243232-MJ_0900"/>
<dbReference type="EnsemblBacteria" id="AAB98903">
    <property type="protein sequence ID" value="AAB98903"/>
    <property type="gene ID" value="MJ_0900"/>
</dbReference>
<dbReference type="KEGG" id="mja:MJ_0900"/>
<dbReference type="eggNOG" id="arCOG01817">
    <property type="taxonomic scope" value="Archaea"/>
</dbReference>
<dbReference type="HOGENOM" id="CLU_005379_2_2_2"/>
<dbReference type="InParanoid" id="Q58310"/>
<dbReference type="PhylomeDB" id="Q58310"/>
<dbReference type="Proteomes" id="UP000000805">
    <property type="component" value="Chromosome"/>
</dbReference>
<dbReference type="GO" id="GO:0016887">
    <property type="term" value="F:ATP hydrolysis activity"/>
    <property type="evidence" value="ECO:0007669"/>
    <property type="project" value="InterPro"/>
</dbReference>
<dbReference type="CDD" id="cd01130">
    <property type="entry name" value="VirB11-like_ATPase"/>
    <property type="match status" value="1"/>
</dbReference>
<dbReference type="FunFam" id="3.30.450.370:FF:000001">
    <property type="entry name" value="Secretion system protein E"/>
    <property type="match status" value="1"/>
</dbReference>
<dbReference type="FunFam" id="3.40.50.300:FF:002252">
    <property type="entry name" value="Type IV secretion system protein"/>
    <property type="match status" value="1"/>
</dbReference>
<dbReference type="Gene3D" id="1.10.390.40">
    <property type="match status" value="1"/>
</dbReference>
<dbReference type="Gene3D" id="3.30.450.370">
    <property type="match status" value="1"/>
</dbReference>
<dbReference type="Gene3D" id="3.40.50.300">
    <property type="entry name" value="P-loop containing nucleotide triphosphate hydrolases"/>
    <property type="match status" value="1"/>
</dbReference>
<dbReference type="InterPro" id="IPR027417">
    <property type="entry name" value="P-loop_NTPase"/>
</dbReference>
<dbReference type="InterPro" id="IPR001482">
    <property type="entry name" value="T2SS/T4SS_dom"/>
</dbReference>
<dbReference type="InterPro" id="IPR050921">
    <property type="entry name" value="T4SS_GSP_E_ATPase"/>
</dbReference>
<dbReference type="PANTHER" id="PTHR30486:SF14">
    <property type="entry name" value="FLAGELLA ACCESSORY PROTEIN I"/>
    <property type="match status" value="1"/>
</dbReference>
<dbReference type="PANTHER" id="PTHR30486">
    <property type="entry name" value="TWITCHING MOTILITY PROTEIN PILT"/>
    <property type="match status" value="1"/>
</dbReference>
<dbReference type="Pfam" id="PF00437">
    <property type="entry name" value="T2SSE"/>
    <property type="match status" value="1"/>
</dbReference>
<dbReference type="SUPFAM" id="SSF52540">
    <property type="entry name" value="P-loop containing nucleoside triphosphate hydrolases"/>
    <property type="match status" value="1"/>
</dbReference>
<comment type="similarity">
    <text evidence="1">Belongs to the GSP E family.</text>
</comment>
<reference key="1">
    <citation type="journal article" date="1996" name="Science">
        <title>Complete genome sequence of the methanogenic archaeon, Methanococcus jannaschii.</title>
        <authorList>
            <person name="Bult C.J."/>
            <person name="White O."/>
            <person name="Olsen G.J."/>
            <person name="Zhou L."/>
            <person name="Fleischmann R.D."/>
            <person name="Sutton G.G."/>
            <person name="Blake J.A."/>
            <person name="FitzGerald L.M."/>
            <person name="Clayton R.A."/>
            <person name="Gocayne J.D."/>
            <person name="Kerlavage A.R."/>
            <person name="Dougherty B.A."/>
            <person name="Tomb J.-F."/>
            <person name="Adams M.D."/>
            <person name="Reich C.I."/>
            <person name="Overbeek R."/>
            <person name="Kirkness E.F."/>
            <person name="Weinstock K.G."/>
            <person name="Merrick J.M."/>
            <person name="Glodek A."/>
            <person name="Scott J.L."/>
            <person name="Geoghagen N.S.M."/>
            <person name="Weidman J.F."/>
            <person name="Fuhrmann J.L."/>
            <person name="Nguyen D."/>
            <person name="Utterback T.R."/>
            <person name="Kelley J.M."/>
            <person name="Peterson J.D."/>
            <person name="Sadow P.W."/>
            <person name="Hanna M.C."/>
            <person name="Cotton M.D."/>
            <person name="Roberts K.M."/>
            <person name="Hurst M.A."/>
            <person name="Kaine B.P."/>
            <person name="Borodovsky M."/>
            <person name="Klenk H.-P."/>
            <person name="Fraser C.M."/>
            <person name="Smith H.O."/>
            <person name="Woese C.R."/>
            <person name="Venter J.C."/>
        </authorList>
    </citation>
    <scope>NUCLEOTIDE SEQUENCE [LARGE SCALE GENOMIC DNA]</scope>
    <source>
        <strain>ATCC 43067 / DSM 2661 / JAL-1 / JCM 10045 / NBRC 100440</strain>
    </source>
</reference>